<sequence>MVKETHRFEPFTEEPIRLIGEEGEWLGDFPLDLEGEKLRRLYRDMLAARMLDERYTILIRTGKTSFIAPAAGHEAAQVAIAHAIRPGFDWVFPYYRDHGLALALGIPLKELFGQMLATKADPNKGRQMPEHPGSKALNFFTVASPIASHVPPAAGAAISMKLLRTGQVAVCTFGDGATSEGDWYAGINFAAVQGAPAVFVCENNFYAISVDYRHQTHSPTIADKAHAFGIPGYLVDGMDVLASYYVVKEAVERARRGEGPSLVELRVYRYGPHSSADDDSRYRPKEEVAFWRKKDPIPRFRRFLEARGLWNEEWEEDVREEIRAELERGLKEAEEAGPVPPEWMFADVFAEKPWHLLRQEALLKEEL</sequence>
<evidence type="ECO:0000250" key="1">
    <source>
        <dbReference type="UniProtKB" id="Q5SLR4"/>
    </source>
</evidence>
<evidence type="ECO:0000305" key="2"/>
<proteinExistence type="inferred from homology"/>
<accession>Q72GU1</accession>
<reference key="1">
    <citation type="journal article" date="2004" name="Nat. Biotechnol.">
        <title>The genome sequence of the extreme thermophile Thermus thermophilus.</title>
        <authorList>
            <person name="Henne A."/>
            <person name="Brueggemann H."/>
            <person name="Raasch C."/>
            <person name="Wiezer A."/>
            <person name="Hartsch T."/>
            <person name="Liesegang H."/>
            <person name="Johann A."/>
            <person name="Lienard T."/>
            <person name="Gohl O."/>
            <person name="Martinez-Arias R."/>
            <person name="Jacobi C."/>
            <person name="Starkuviene V."/>
            <person name="Schlenczeck S."/>
            <person name="Dencker S."/>
            <person name="Huber R."/>
            <person name="Klenk H.-P."/>
            <person name="Kramer W."/>
            <person name="Merkl R."/>
            <person name="Gottschalk G."/>
            <person name="Fritz H.-J."/>
        </authorList>
    </citation>
    <scope>NUCLEOTIDE SEQUENCE [LARGE SCALE GENOMIC DNA]</scope>
    <source>
        <strain>ATCC BAA-163 / DSM 7039 / HB27</strain>
    </source>
</reference>
<dbReference type="EC" id="1.2.4.4"/>
<dbReference type="EMBL" id="AE017221">
    <property type="protein sequence ID" value="AAS82099.1"/>
    <property type="molecule type" value="Genomic_DNA"/>
</dbReference>
<dbReference type="RefSeq" id="WP_011174115.1">
    <property type="nucleotide sequence ID" value="NC_005835.1"/>
</dbReference>
<dbReference type="SMR" id="Q72GU1"/>
<dbReference type="KEGG" id="tth:TT_C1757"/>
<dbReference type="eggNOG" id="COG1071">
    <property type="taxonomic scope" value="Bacteria"/>
</dbReference>
<dbReference type="HOGENOM" id="CLU_029393_1_0_0"/>
<dbReference type="OrthoDB" id="9766715at2"/>
<dbReference type="BRENDA" id="1.2.4.4">
    <property type="organism ID" value="2305"/>
</dbReference>
<dbReference type="Proteomes" id="UP000000592">
    <property type="component" value="Chromosome"/>
</dbReference>
<dbReference type="GO" id="GO:0003863">
    <property type="term" value="F:3-methyl-2-oxobutanoate dehydrogenase (2-methylpropanoyl-transferring) activity"/>
    <property type="evidence" value="ECO:0007669"/>
    <property type="project" value="UniProtKB-EC"/>
</dbReference>
<dbReference type="GO" id="GO:0046872">
    <property type="term" value="F:metal ion binding"/>
    <property type="evidence" value="ECO:0007669"/>
    <property type="project" value="UniProtKB-KW"/>
</dbReference>
<dbReference type="GO" id="GO:0009083">
    <property type="term" value="P:branched-chain amino acid catabolic process"/>
    <property type="evidence" value="ECO:0007669"/>
    <property type="project" value="TreeGrafter"/>
</dbReference>
<dbReference type="CDD" id="cd02000">
    <property type="entry name" value="TPP_E1_PDC_ADC_BCADC"/>
    <property type="match status" value="1"/>
</dbReference>
<dbReference type="Gene3D" id="3.40.50.970">
    <property type="match status" value="1"/>
</dbReference>
<dbReference type="InterPro" id="IPR050771">
    <property type="entry name" value="Alpha-ketoacid_DH_E1_comp"/>
</dbReference>
<dbReference type="InterPro" id="IPR001017">
    <property type="entry name" value="DH_E1"/>
</dbReference>
<dbReference type="InterPro" id="IPR029061">
    <property type="entry name" value="THDP-binding"/>
</dbReference>
<dbReference type="PANTHER" id="PTHR43380">
    <property type="entry name" value="2-OXOISOVALERATE DEHYDROGENASE SUBUNIT ALPHA, MITOCHONDRIAL"/>
    <property type="match status" value="1"/>
</dbReference>
<dbReference type="PANTHER" id="PTHR43380:SF1">
    <property type="entry name" value="2-OXOISOVALERATE DEHYDROGENASE SUBUNIT ALPHA, MITOCHONDRIAL"/>
    <property type="match status" value="1"/>
</dbReference>
<dbReference type="Pfam" id="PF00676">
    <property type="entry name" value="E1_dh"/>
    <property type="match status" value="1"/>
</dbReference>
<dbReference type="SUPFAM" id="SSF52518">
    <property type="entry name" value="Thiamin diphosphate-binding fold (THDP-binding)"/>
    <property type="match status" value="1"/>
</dbReference>
<comment type="function">
    <text evidence="1">The branched-chain alpha-keto dehydrogenase complex catalyzes the overall conversion of alpha-keto acids to acyl-CoA and CO(2). It contains multiple copies of three enzymatic components: branched-chain alpha-keto acid decarboxylase (E1), lipoamide acyltransferase (E2) and lipoamide dehydrogenase (E3) (By similarity).</text>
</comment>
<comment type="catalytic activity">
    <reaction evidence="1">
        <text>N(6)-[(R)-lipoyl]-L-lysyl-[protein] + 3-methyl-2-oxobutanoate + H(+) = N(6)-[(R)-S(8)-2-methylpropanoyldihydrolipoyl]-L-lysyl-[protein] + CO2</text>
        <dbReference type="Rhea" id="RHEA:13457"/>
        <dbReference type="Rhea" id="RHEA-COMP:10474"/>
        <dbReference type="Rhea" id="RHEA-COMP:10497"/>
        <dbReference type="ChEBI" id="CHEBI:11851"/>
        <dbReference type="ChEBI" id="CHEBI:15378"/>
        <dbReference type="ChEBI" id="CHEBI:16526"/>
        <dbReference type="ChEBI" id="CHEBI:83099"/>
        <dbReference type="ChEBI" id="CHEBI:83142"/>
        <dbReference type="EC" id="1.2.4.4"/>
    </reaction>
</comment>
<comment type="cofactor">
    <cofactor evidence="1">
        <name>thiamine diphosphate</name>
        <dbReference type="ChEBI" id="CHEBI:58937"/>
    </cofactor>
</comment>
<comment type="subunit">
    <text evidence="1">Heterotetramer of two alpha and two beta chains. Directly associated with ODBB in the E1 complex (By similarity).</text>
</comment>
<comment type="similarity">
    <text evidence="2">Belongs to the BCKDHA family.</text>
</comment>
<organism>
    <name type="scientific">Thermus thermophilus (strain ATCC BAA-163 / DSM 7039 / HB27)</name>
    <dbReference type="NCBI Taxonomy" id="262724"/>
    <lineage>
        <taxon>Bacteria</taxon>
        <taxon>Thermotogati</taxon>
        <taxon>Deinococcota</taxon>
        <taxon>Deinococci</taxon>
        <taxon>Thermales</taxon>
        <taxon>Thermaceae</taxon>
        <taxon>Thermus</taxon>
    </lineage>
</organism>
<name>ODBA_THET2</name>
<protein>
    <recommendedName>
        <fullName>2-oxoisovalerate dehydrogenase subunit alpha</fullName>
        <ecNumber>1.2.4.4</ecNumber>
    </recommendedName>
    <alternativeName>
        <fullName>Branched-chain alpha-keto acid dehydrogenase E1 component alpha chain</fullName>
        <shortName>BCKDH E1-alpha</shortName>
    </alternativeName>
</protein>
<feature type="chain" id="PRO_0000294974" description="2-oxoisovalerate dehydrogenase subunit alpha">
    <location>
        <begin position="1"/>
        <end position="367"/>
    </location>
</feature>
<feature type="binding site" evidence="1">
    <location>
        <position position="66"/>
    </location>
    <ligand>
        <name>substrate</name>
    </ligand>
</feature>
<feature type="binding site" evidence="1">
    <location>
        <begin position="94"/>
        <end position="96"/>
    </location>
    <ligand>
        <name>thiamine diphosphate</name>
        <dbReference type="ChEBI" id="CHEBI:58937"/>
    </ligand>
</feature>
<feature type="binding site" evidence="1">
    <location>
        <position position="95"/>
    </location>
    <ligand>
        <name>substrate</name>
    </ligand>
</feature>
<feature type="binding site" evidence="1">
    <location>
        <begin position="128"/>
        <end position="131"/>
    </location>
    <ligand>
        <name>substrate</name>
    </ligand>
</feature>
<feature type="binding site" evidence="1">
    <location>
        <begin position="144"/>
        <end position="146"/>
    </location>
    <ligand>
        <name>thiamine diphosphate</name>
        <dbReference type="ChEBI" id="CHEBI:58937"/>
    </ligand>
</feature>
<feature type="binding site" evidence="1">
    <location>
        <position position="144"/>
    </location>
    <ligand>
        <name>substrate</name>
    </ligand>
</feature>
<feature type="binding site" evidence="1">
    <location>
        <begin position="174"/>
        <end position="180"/>
    </location>
    <ligand>
        <name>thiamine diphosphate</name>
        <dbReference type="ChEBI" id="CHEBI:58937"/>
    </ligand>
</feature>
<feature type="binding site" evidence="1">
    <location>
        <position position="175"/>
    </location>
    <ligand>
        <name>Mg(2+)</name>
        <dbReference type="ChEBI" id="CHEBI:18420"/>
    </ligand>
</feature>
<feature type="binding site" evidence="1">
    <location>
        <begin position="204"/>
        <end position="208"/>
    </location>
    <ligand>
        <name>thiamine diphosphate</name>
        <dbReference type="ChEBI" id="CHEBI:58937"/>
    </ligand>
</feature>
<feature type="binding site" evidence="1">
    <location>
        <position position="204"/>
    </location>
    <ligand>
        <name>Mg(2+)</name>
        <dbReference type="ChEBI" id="CHEBI:18420"/>
    </ligand>
</feature>
<feature type="binding site" evidence="1">
    <location>
        <position position="206"/>
    </location>
    <ligand>
        <name>Mg(2+)</name>
        <dbReference type="ChEBI" id="CHEBI:18420"/>
    </ligand>
</feature>
<feature type="binding site" evidence="1">
    <location>
        <position position="273"/>
    </location>
    <ligand>
        <name>thiamine diphosphate</name>
        <dbReference type="ChEBI" id="CHEBI:58937"/>
    </ligand>
</feature>
<gene>
    <name type="ordered locus">TT_C1757</name>
</gene>
<keyword id="KW-0460">Magnesium</keyword>
<keyword id="KW-0479">Metal-binding</keyword>
<keyword id="KW-0560">Oxidoreductase</keyword>
<keyword id="KW-0786">Thiamine pyrophosphate</keyword>